<protein>
    <recommendedName>
        <fullName evidence="1">Dual specificity mitogen-activated protein kinase kinase mek-1</fullName>
        <ecNumber evidence="6">2.7.12.2</ecNumber>
    </recommendedName>
</protein>
<organism evidence="14">
    <name type="scientific">Caenorhabditis elegans</name>
    <dbReference type="NCBI Taxonomy" id="6239"/>
    <lineage>
        <taxon>Eukaryota</taxon>
        <taxon>Metazoa</taxon>
        <taxon>Ecdysozoa</taxon>
        <taxon>Nematoda</taxon>
        <taxon>Chromadorea</taxon>
        <taxon>Rhabditida</taxon>
        <taxon>Rhabditina</taxon>
        <taxon>Rhabditomorpha</taxon>
        <taxon>Rhabditoidea</taxon>
        <taxon>Rhabditidae</taxon>
        <taxon>Peloderinae</taxon>
        <taxon>Caenorhabditis</taxon>
    </lineage>
</organism>
<dbReference type="EC" id="2.7.12.2" evidence="6"/>
<dbReference type="EMBL" id="BX284606">
    <property type="protein sequence ID" value="CCD62387.1"/>
    <property type="molecule type" value="Genomic_DNA"/>
</dbReference>
<dbReference type="EMBL" id="BX284606">
    <property type="protein sequence ID" value="CCD62388.1"/>
    <property type="molecule type" value="Genomic_DNA"/>
</dbReference>
<dbReference type="PIR" id="T16583">
    <property type="entry name" value="T16583"/>
</dbReference>
<dbReference type="RefSeq" id="NP_001024771.1">
    <property type="nucleotide sequence ID" value="NM_001029600.7"/>
</dbReference>
<dbReference type="SMR" id="Q21307"/>
<dbReference type="DIP" id="DIP-24753N"/>
<dbReference type="FunCoup" id="Q21307">
    <property type="interactions" value="1648"/>
</dbReference>
<dbReference type="IntAct" id="Q21307">
    <property type="interactions" value="5"/>
</dbReference>
<dbReference type="STRING" id="6239.K08A8.1a.1"/>
<dbReference type="iPTMnet" id="Q21307"/>
<dbReference type="PaxDb" id="6239-K08A8.1a"/>
<dbReference type="PeptideAtlas" id="Q21307"/>
<dbReference type="EnsemblMetazoa" id="K08A8.1a.1">
    <property type="protein sequence ID" value="K08A8.1a.1"/>
    <property type="gene ID" value="WBGene00003185"/>
</dbReference>
<dbReference type="GeneID" id="181004"/>
<dbReference type="KEGG" id="cel:CELE_K08A8.1"/>
<dbReference type="UCSC" id="K08A8.1b">
    <property type="organism name" value="c. elegans"/>
</dbReference>
<dbReference type="AGR" id="WB:WBGene00003185"/>
<dbReference type="CTD" id="181004"/>
<dbReference type="WormBase" id="K08A8.1a">
    <property type="protein sequence ID" value="CE30816"/>
    <property type="gene ID" value="WBGene00003185"/>
    <property type="gene designation" value="mek-1"/>
</dbReference>
<dbReference type="eggNOG" id="KOG0983">
    <property type="taxonomic scope" value="Eukaryota"/>
</dbReference>
<dbReference type="GeneTree" id="ENSGT00940000158914"/>
<dbReference type="InParanoid" id="Q21307"/>
<dbReference type="OMA" id="CFVMELM"/>
<dbReference type="OrthoDB" id="10252354at2759"/>
<dbReference type="PhylomeDB" id="Q21307"/>
<dbReference type="Reactome" id="R-CEL-168638">
    <property type="pathway name" value="NOD1/2 Signaling Pathway"/>
</dbReference>
<dbReference type="Reactome" id="R-CEL-2559580">
    <property type="pathway name" value="Oxidative Stress Induced Senescence"/>
</dbReference>
<dbReference type="Reactome" id="R-CEL-450302">
    <property type="pathway name" value="activated TAK1 mediates p38 MAPK activation"/>
</dbReference>
<dbReference type="Reactome" id="R-CEL-6811555">
    <property type="pathway name" value="PI5P Regulates TP53 Acetylation"/>
</dbReference>
<dbReference type="Reactome" id="R-CEL-9833482">
    <property type="pathway name" value="PKR-mediated signaling"/>
</dbReference>
<dbReference type="SignaLink" id="Q21307"/>
<dbReference type="PRO" id="PR:Q21307"/>
<dbReference type="Proteomes" id="UP000001940">
    <property type="component" value="Chromosome X"/>
</dbReference>
<dbReference type="Bgee" id="WBGene00003185">
    <property type="expression patterns" value="Expressed in germ line (C elegans) and 4 other cell types or tissues"/>
</dbReference>
<dbReference type="GO" id="GO:0005737">
    <property type="term" value="C:cytoplasm"/>
    <property type="evidence" value="ECO:0000305"/>
    <property type="project" value="WormBase"/>
</dbReference>
<dbReference type="GO" id="GO:0005524">
    <property type="term" value="F:ATP binding"/>
    <property type="evidence" value="ECO:0007669"/>
    <property type="project" value="UniProtKB-KW"/>
</dbReference>
<dbReference type="GO" id="GO:0008545">
    <property type="term" value="F:JUN kinase kinase activity"/>
    <property type="evidence" value="ECO:0000314"/>
    <property type="project" value="WormBase"/>
</dbReference>
<dbReference type="GO" id="GO:0004708">
    <property type="term" value="F:MAP kinase kinase activity"/>
    <property type="evidence" value="ECO:0000314"/>
    <property type="project" value="WormBase"/>
</dbReference>
<dbReference type="GO" id="GO:0046872">
    <property type="term" value="F:metal ion binding"/>
    <property type="evidence" value="ECO:0007669"/>
    <property type="project" value="UniProtKB-KW"/>
</dbReference>
<dbReference type="GO" id="GO:0106310">
    <property type="term" value="F:protein serine kinase activity"/>
    <property type="evidence" value="ECO:0007669"/>
    <property type="project" value="RHEA"/>
</dbReference>
<dbReference type="GO" id="GO:0004674">
    <property type="term" value="F:protein serine/threonine kinase activity"/>
    <property type="evidence" value="ECO:0007669"/>
    <property type="project" value="UniProtKB-KW"/>
</dbReference>
<dbReference type="GO" id="GO:0004713">
    <property type="term" value="F:protein tyrosine kinase activity"/>
    <property type="evidence" value="ECO:0007669"/>
    <property type="project" value="UniProtKB-KW"/>
</dbReference>
<dbReference type="GO" id="GO:0042169">
    <property type="term" value="F:SH2 domain binding"/>
    <property type="evidence" value="ECO:0000353"/>
    <property type="project" value="WormBase"/>
</dbReference>
<dbReference type="GO" id="GO:0008340">
    <property type="term" value="P:determination of adult lifespan"/>
    <property type="evidence" value="ECO:0000315"/>
    <property type="project" value="UniProtKB"/>
</dbReference>
<dbReference type="GO" id="GO:0007254">
    <property type="term" value="P:JNK cascade"/>
    <property type="evidence" value="ECO:0000315"/>
    <property type="project" value="UniProtKB"/>
</dbReference>
<dbReference type="GO" id="GO:0007140">
    <property type="term" value="P:male meiotic nuclear division"/>
    <property type="evidence" value="ECO:0000315"/>
    <property type="project" value="WormBase"/>
</dbReference>
<dbReference type="GO" id="GO:0000165">
    <property type="term" value="P:MAPK cascade"/>
    <property type="evidence" value="ECO:0000314"/>
    <property type="project" value="WormBase"/>
</dbReference>
<dbReference type="GO" id="GO:0048599">
    <property type="term" value="P:oocyte development"/>
    <property type="evidence" value="ECO:0000315"/>
    <property type="project" value="WormBase"/>
</dbReference>
<dbReference type="GO" id="GO:0038066">
    <property type="term" value="P:p38MAPK cascade"/>
    <property type="evidence" value="ECO:0000315"/>
    <property type="project" value="WormBase"/>
</dbReference>
<dbReference type="GO" id="GO:0048691">
    <property type="term" value="P:positive regulation of axon extension involved in regeneration"/>
    <property type="evidence" value="ECO:0000315"/>
    <property type="project" value="UniProtKB"/>
</dbReference>
<dbReference type="GO" id="GO:0040009">
    <property type="term" value="P:regulation of growth rate"/>
    <property type="evidence" value="ECO:0000316"/>
    <property type="project" value="WormBase"/>
</dbReference>
<dbReference type="GO" id="GO:0046686">
    <property type="term" value="P:response to cadmium ion"/>
    <property type="evidence" value="ECO:0000315"/>
    <property type="project" value="WormBase"/>
</dbReference>
<dbReference type="GO" id="GO:0046688">
    <property type="term" value="P:response to copper ion"/>
    <property type="evidence" value="ECO:0000315"/>
    <property type="project" value="WormBase"/>
</dbReference>
<dbReference type="GO" id="GO:0042594">
    <property type="term" value="P:response to starvation"/>
    <property type="evidence" value="ECO:0000315"/>
    <property type="project" value="UniProtKB"/>
</dbReference>
<dbReference type="GO" id="GO:0009266">
    <property type="term" value="P:response to temperature stimulus"/>
    <property type="evidence" value="ECO:0000315"/>
    <property type="project" value="WormBase"/>
</dbReference>
<dbReference type="GO" id="GO:1990169">
    <property type="term" value="P:stress response to copper ion"/>
    <property type="evidence" value="ECO:0000315"/>
    <property type="project" value="WormBase"/>
</dbReference>
<dbReference type="CDD" id="cd06618">
    <property type="entry name" value="PKc_MKK7"/>
    <property type="match status" value="1"/>
</dbReference>
<dbReference type="FunFam" id="3.30.200.20:FF:000040">
    <property type="entry name" value="Dual specificity mitogen-activated protein kinase kinase"/>
    <property type="match status" value="1"/>
</dbReference>
<dbReference type="FunFam" id="1.10.510.10:FF:001891">
    <property type="entry name" value="Dual specificity mitogen-activated protein kinase kinase mek-1"/>
    <property type="match status" value="1"/>
</dbReference>
<dbReference type="Gene3D" id="3.30.200.20">
    <property type="entry name" value="Phosphorylase Kinase, domain 1"/>
    <property type="match status" value="1"/>
</dbReference>
<dbReference type="Gene3D" id="1.10.510.10">
    <property type="entry name" value="Transferase(Phosphotransferase) domain 1"/>
    <property type="match status" value="1"/>
</dbReference>
<dbReference type="InterPro" id="IPR052468">
    <property type="entry name" value="Dual_spec_MAPK_kinase"/>
</dbReference>
<dbReference type="InterPro" id="IPR011009">
    <property type="entry name" value="Kinase-like_dom_sf"/>
</dbReference>
<dbReference type="InterPro" id="IPR000719">
    <property type="entry name" value="Prot_kinase_dom"/>
</dbReference>
<dbReference type="InterPro" id="IPR008271">
    <property type="entry name" value="Ser/Thr_kinase_AS"/>
</dbReference>
<dbReference type="PANTHER" id="PTHR47238:SF2">
    <property type="entry name" value="DUAL SPECIFICITY MITOGEN-ACTIVATED PROTEIN KINASE KINASE HEMIPTEROUS"/>
    <property type="match status" value="1"/>
</dbReference>
<dbReference type="PANTHER" id="PTHR47238">
    <property type="entry name" value="MITOGEN-ACTIVATED PROTEIN KINASE KINASE 5"/>
    <property type="match status" value="1"/>
</dbReference>
<dbReference type="Pfam" id="PF00069">
    <property type="entry name" value="Pkinase"/>
    <property type="match status" value="1"/>
</dbReference>
<dbReference type="SMART" id="SM00220">
    <property type="entry name" value="S_TKc"/>
    <property type="match status" value="1"/>
</dbReference>
<dbReference type="SUPFAM" id="SSF56112">
    <property type="entry name" value="Protein kinase-like (PK-like)"/>
    <property type="match status" value="1"/>
</dbReference>
<dbReference type="PROSITE" id="PS50011">
    <property type="entry name" value="PROTEIN_KINASE_DOM"/>
    <property type="match status" value="1"/>
</dbReference>
<dbReference type="PROSITE" id="PS00108">
    <property type="entry name" value="PROTEIN_KINASE_ST"/>
    <property type="match status" value="1"/>
</dbReference>
<name>MEK1_CAEEL</name>
<gene>
    <name evidence="15" type="primary">mek-1</name>
    <name evidence="15" type="ORF">K08A8.1</name>
</gene>
<keyword id="KW-0067">ATP-binding</keyword>
<keyword id="KW-0418">Kinase</keyword>
<keyword id="KW-0460">Magnesium</keyword>
<keyword id="KW-0479">Metal-binding</keyword>
<keyword id="KW-0547">Nucleotide-binding</keyword>
<keyword id="KW-0597">Phosphoprotein</keyword>
<keyword id="KW-1185">Reference proteome</keyword>
<keyword id="KW-0723">Serine/threonine-protein kinase</keyword>
<keyword id="KW-0346">Stress response</keyword>
<keyword id="KW-0808">Transferase</keyword>
<keyword id="KW-0829">Tyrosine-protein kinase</keyword>
<accession>Q21307</accession>
<accession>Q7Z1P1</accession>
<sequence length="347" mass="39422">MERDFDLGMGRPGGLGGLGGEPIMQQMPQPAPHHPSRSSNDHNVKNLMKQAEENSGYLTLQGNRRKADLKELQFVEDIGHGSCGTVTKCRYKSVIMAVKTMPRTSNSYEMSRILMDLDVICLSFDCPYIVRCFGYFITNFDVRVCMECMATCLDRLLIRIKQPIPERIIGKLSVSIIKALHYLKTKHQIMHRDVKPSNILLDWSGVIKLCDFGIAGRLIESRAHSKQAGCPLYMGPERLDPNNFDSYDIRSDVWSFGVTLVELATGQYPYAGTEFDMMSKILNDEPPRLDPAKFSPDFCQLVESCLQRDPTMRPNYDMLLQHPFVVHHEKIETDVEEWFADVMGECG</sequence>
<evidence type="ECO:0000250" key="1">
    <source>
        <dbReference type="UniProtKB" id="O14733"/>
    </source>
</evidence>
<evidence type="ECO:0000250" key="2">
    <source>
        <dbReference type="UniProtKB" id="Q8CE90"/>
    </source>
</evidence>
<evidence type="ECO:0000255" key="3">
    <source>
        <dbReference type="PROSITE-ProRule" id="PRU00159"/>
    </source>
</evidence>
<evidence type="ECO:0000256" key="4">
    <source>
        <dbReference type="SAM" id="MobiDB-lite"/>
    </source>
</evidence>
<evidence type="ECO:0000269" key="5">
    <source>
    </source>
</evidence>
<evidence type="ECO:0000269" key="6">
    <source>
    </source>
</evidence>
<evidence type="ECO:0000269" key="7">
    <source>
    </source>
</evidence>
<evidence type="ECO:0000269" key="8">
    <source>
    </source>
</evidence>
<evidence type="ECO:0000269" key="9">
    <source>
    </source>
</evidence>
<evidence type="ECO:0000269" key="10">
    <source>
    </source>
</evidence>
<evidence type="ECO:0000269" key="11">
    <source>
    </source>
</evidence>
<evidence type="ECO:0000269" key="12">
    <source>
    </source>
</evidence>
<evidence type="ECO:0000305" key="13"/>
<evidence type="ECO:0000312" key="14">
    <source>
        <dbReference type="Proteomes" id="UP000001940"/>
    </source>
</evidence>
<evidence type="ECO:0000312" key="15">
    <source>
        <dbReference type="WormBase" id="K08A8.1a"/>
    </source>
</evidence>
<proteinExistence type="evidence at protein level"/>
<reference evidence="13" key="1">
    <citation type="journal article" date="2000" name="EMBO J.">
        <title>A Caenorhabditis elegans MAP kinase kinase, MEK-1, is involved in stress responses.</title>
        <authorList>
            <person name="Koga M."/>
            <person name="Zwaal R."/>
            <person name="Guan K.L."/>
            <person name="Avery L."/>
            <person name="Ohshima Y."/>
        </authorList>
    </citation>
    <scope>NUCLEOTIDE SEQUENCE [MRNA]</scope>
    <scope>FUNCTION</scope>
    <scope>TISSUE SPECIFICITY</scope>
    <scope>DEVELOPMENTAL STAGE</scope>
    <scope>DISRUPTION PHENOTYPE</scope>
    <scope>MUTAGENESIS OF SER-221 AND SER-225</scope>
</reference>
<reference evidence="14" key="2">
    <citation type="journal article" date="1998" name="Science">
        <title>Genome sequence of the nematode C. elegans: a platform for investigating biology.</title>
        <authorList>
            <consortium name="The C. elegans sequencing consortium"/>
        </authorList>
    </citation>
    <scope>NUCLEOTIDE SEQUENCE [LARGE SCALE GENOMIC DNA]</scope>
    <source>
        <strain evidence="14">Bristol N2</strain>
    </source>
</reference>
<reference evidence="13" key="3">
    <citation type="journal article" date="2004" name="EMBO J.">
        <title>The Caenorhabditis elegans MAPK phosphatase VHP-1 mediates a novel JNK-like signaling pathway in stress response.</title>
        <authorList>
            <person name="Mizuno T."/>
            <person name="Hisamoto N."/>
            <person name="Terada T."/>
            <person name="Kondo T."/>
            <person name="Adachi M."/>
            <person name="Nishida E."/>
            <person name="Kim D.H."/>
            <person name="Ausubel F.M."/>
            <person name="Matsumoto K."/>
        </authorList>
    </citation>
    <scope>FUNCTION</scope>
    <scope>CATALYTIC ACTIVITY</scope>
    <scope>DISRUPTION PHENOTYPE</scope>
    <scope>MUTAGENESIS OF LYS-99</scope>
</reference>
<reference evidence="13" key="4">
    <citation type="journal article" date="2004" name="Proc. Natl. Acad. Sci. U.S.A.">
        <title>Integration of Caenorhabditis elegans MAPK pathways mediating immunity and stress resistance by MEK-1 MAPK kinase and VHP-1 MAPK phosphatase.</title>
        <authorList>
            <person name="Kim D.H."/>
            <person name="Liberati N.T."/>
            <person name="Mizuno T."/>
            <person name="Inoue H."/>
            <person name="Hisamoto N."/>
            <person name="Matsumoto K."/>
            <person name="Ausubel F.M."/>
        </authorList>
    </citation>
    <scope>FUNCTION</scope>
    <scope>DISRUPTION PHENOTYPE</scope>
</reference>
<reference key="5">
    <citation type="journal article" date="2006" name="Cell Death Differ.">
        <title>Stress-induced germ cell apoptosis by a p53 independent pathway in Caenorhabditis elegans.</title>
        <authorList>
            <person name="Salinas L.S."/>
            <person name="Maldonado E."/>
            <person name="Navarro R.E."/>
        </authorList>
    </citation>
    <scope>FUNCTION</scope>
</reference>
<reference key="6">
    <citation type="journal article" date="2008" name="Genes Dev.">
        <title>SHC-1/p52Shc targets the insulin/IGF-1 and JNK signaling pathways to modulate life span and stress response in C. elegans.</title>
        <authorList>
            <person name="Neumann-Haefelin E."/>
            <person name="Qi W."/>
            <person name="Finkbeiner E."/>
            <person name="Walz G."/>
            <person name="Baumeister R."/>
            <person name="Hertweck M."/>
        </authorList>
    </citation>
    <scope>FUNCTION</scope>
    <scope>INTERACTION WITH SHC-1</scope>
</reference>
<reference key="7">
    <citation type="journal article" date="2008" name="Mol. Cell. Biol.">
        <title>Role of the Caenorhabditis elegans Shc adaptor protein in the c-Jun N-terminal kinase signaling pathway.</title>
        <authorList>
            <person name="Mizuno T."/>
            <person name="Fujiki K."/>
            <person name="Sasakawa A."/>
            <person name="Hisamoto N."/>
            <person name="Matsumoto K."/>
        </authorList>
    </citation>
    <scope>FUNCTION</scope>
    <scope>ACTIVITY REGULATION</scope>
    <scope>INTERACTION WITH SHC-1</scope>
    <scope>TISSUE SPECIFICITY</scope>
    <scope>MUTAGENESIS OF LYS-99</scope>
</reference>
<reference key="8">
    <citation type="journal article" date="2010" name="Mol. Cell. Biol.">
        <title>The Caenorhabditis elegans Ste20-related kinase and Rac-type small GTPase regulate the c-Jun N-terminal kinase signaling pathway mediating the stress response.</title>
        <authorList>
            <person name="Fujiki K."/>
            <person name="Mizuno T."/>
            <person name="Hisamoto N."/>
            <person name="Matsumoto K."/>
        </authorList>
    </citation>
    <scope>FUNCTION</scope>
    <scope>DISRUPTION PHENOTYPE</scope>
    <scope>PHOSPHORYLATION AT SER-221 AND SER-225</scope>
    <scope>MUTAGENESIS OF LYS-99; SER-221 AND SER-225</scope>
</reference>
<reference key="9">
    <citation type="journal article" date="2011" name="Proc. Natl. Acad. Sci. U.S.A.">
        <title>Axon regeneration requires coordinate activation of p38 and JNK MAPK pathways.</title>
        <authorList>
            <person name="Nix P."/>
            <person name="Hisamoto N."/>
            <person name="Matsumoto K."/>
            <person name="Bastiani M."/>
        </authorList>
    </citation>
    <scope>FUNCTION</scope>
</reference>
<feature type="chain" id="PRO_0000433509" description="Dual specificity mitogen-activated protein kinase kinase mek-1" evidence="13">
    <location>
        <begin position="1"/>
        <end position="347"/>
    </location>
</feature>
<feature type="domain" description="Protein kinase" evidence="3">
    <location>
        <begin position="72"/>
        <end position="325"/>
    </location>
</feature>
<feature type="region of interest" description="Disordered" evidence="4">
    <location>
        <begin position="1"/>
        <end position="42"/>
    </location>
</feature>
<feature type="compositionally biased region" description="Gly residues" evidence="4">
    <location>
        <begin position="10"/>
        <end position="20"/>
    </location>
</feature>
<feature type="active site" description="Proton acceptor" evidence="3">
    <location>
        <position position="193"/>
    </location>
</feature>
<feature type="binding site" evidence="3">
    <location>
        <begin position="78"/>
        <end position="86"/>
    </location>
    <ligand>
        <name>ATP</name>
        <dbReference type="ChEBI" id="CHEBI:30616"/>
    </ligand>
</feature>
<feature type="binding site" evidence="3">
    <location>
        <position position="99"/>
    </location>
    <ligand>
        <name>ATP</name>
        <dbReference type="ChEBI" id="CHEBI:30616"/>
    </ligand>
</feature>
<feature type="modified residue" description="Phosphoserine" evidence="11">
    <location>
        <position position="221"/>
    </location>
</feature>
<feature type="modified residue" description="Phosphoserine" evidence="11">
    <location>
        <position position="225"/>
    </location>
</feature>
<feature type="mutagenesis site" description="Loss of kinase activity. Loss of kgb-1 activation. No effect on the interaction with shc-1. No effect on phosphorylation by mlk-1." evidence="6 9 11">
    <original>K</original>
    <variation>R</variation>
    <location>
        <position position="99"/>
    </location>
</feature>
<feature type="mutagenesis site" description="Abolishes phosphorylation by mlk-1; when associated with A-225." evidence="11">
    <original>S</original>
    <variation>A</variation>
    <location>
        <position position="221"/>
    </location>
</feature>
<feature type="mutagenesis site" description="Phosphomimetic mutant which probably causes constitutive kinase activation. Loss of pharyngeal muscle contraction and egg laying. Formation of vacuoles in the pharynx and uterus lumen; when associated with E-225." evidence="5">
    <original>S</original>
    <variation>E</variation>
    <location>
        <position position="221"/>
    </location>
</feature>
<feature type="mutagenesis site" description="Abolishes phosphorylation by mlk-1; when associated with A-221." evidence="11">
    <original>S</original>
    <variation>A</variation>
    <location>
        <position position="225"/>
    </location>
</feature>
<feature type="mutagenesis site" description="Phosphomimetic mutant which probably causes constitutive kinase activation. Loss of pharyngeal muscle contraction and egg laying. Formation of vacuoles in the pharynx and uterus lumen; when associated with E-221." evidence="5">
    <original>S</original>
    <variation>E</variation>
    <location>
        <position position="225"/>
    </location>
</feature>
<comment type="function">
    <text evidence="5 6 7 8 9 10 11 12">Dual specificity protein kinase which may phosphorylate kgb-1 and thereby is an essential component of the JNK pathway composed of mlk-1, mek-1 and kgb-1 (PubMed:15116070, PubMed:18809575, PubMed:20008556). May also have a synergistic role with sek-1 in phosphorylating pmk-1 (PubMed:15256594, PubMed:18809575). Involved in the response to environmental stress including heavy metal ions (Cu(2+) and Cd(2+)), oxidative stress and starvation (PubMed:11013217, PubMed:15116070, PubMed:18809575, PubMed:18832074). In association with sek-1, regulates germline cell apoptosis in response to oxidative, osmotic and heat shock stresses (PubMed:16729024). Involved in resistance to pathogenic bacteria infection (PubMed:15256594). Involved in axon regeneration after injury (PubMed:21670305).</text>
</comment>
<comment type="catalytic activity">
    <reaction evidence="6">
        <text>L-seryl-[protein] + ATP = O-phospho-L-seryl-[protein] + ADP + H(+)</text>
        <dbReference type="Rhea" id="RHEA:17989"/>
        <dbReference type="Rhea" id="RHEA-COMP:9863"/>
        <dbReference type="Rhea" id="RHEA-COMP:11604"/>
        <dbReference type="ChEBI" id="CHEBI:15378"/>
        <dbReference type="ChEBI" id="CHEBI:29999"/>
        <dbReference type="ChEBI" id="CHEBI:30616"/>
        <dbReference type="ChEBI" id="CHEBI:83421"/>
        <dbReference type="ChEBI" id="CHEBI:456216"/>
        <dbReference type="EC" id="2.7.12.2"/>
    </reaction>
</comment>
<comment type="catalytic activity">
    <reaction evidence="6">
        <text>L-threonyl-[protein] + ATP = O-phospho-L-threonyl-[protein] + ADP + H(+)</text>
        <dbReference type="Rhea" id="RHEA:46608"/>
        <dbReference type="Rhea" id="RHEA-COMP:11060"/>
        <dbReference type="Rhea" id="RHEA-COMP:11605"/>
        <dbReference type="ChEBI" id="CHEBI:15378"/>
        <dbReference type="ChEBI" id="CHEBI:30013"/>
        <dbReference type="ChEBI" id="CHEBI:30616"/>
        <dbReference type="ChEBI" id="CHEBI:61977"/>
        <dbReference type="ChEBI" id="CHEBI:456216"/>
        <dbReference type="EC" id="2.7.12.2"/>
    </reaction>
</comment>
<comment type="catalytic activity">
    <reaction evidence="6">
        <text>L-tyrosyl-[protein] + ATP = O-phospho-L-tyrosyl-[protein] + ADP + H(+)</text>
        <dbReference type="Rhea" id="RHEA:10596"/>
        <dbReference type="Rhea" id="RHEA-COMP:10136"/>
        <dbReference type="Rhea" id="RHEA-COMP:20101"/>
        <dbReference type="ChEBI" id="CHEBI:15378"/>
        <dbReference type="ChEBI" id="CHEBI:30616"/>
        <dbReference type="ChEBI" id="CHEBI:46858"/>
        <dbReference type="ChEBI" id="CHEBI:61978"/>
        <dbReference type="ChEBI" id="CHEBI:456216"/>
        <dbReference type="EC" id="2.7.12.2"/>
    </reaction>
</comment>
<comment type="cofactor">
    <cofactor evidence="2">
        <name>Mg(2+)</name>
        <dbReference type="ChEBI" id="CHEBI:18420"/>
    </cofactor>
</comment>
<comment type="activity regulation">
    <text evidence="9">May be activated by phosphorylation at Ser-221 and Ser-225.</text>
</comment>
<comment type="subunit">
    <text evidence="9 10">Interacts with shc-1; the interaction is independent of mek-1 catalytic activity, is constitutive and may facilitate mlk-1-mediated phosphorylation by bringing mlk-1 and mek-1 together.</text>
</comment>
<comment type="tissue specificity">
    <text evidence="5 9">Expressed in pharyngeal muscles, uterine endothelial cells, intestine and in neurons of ring ganglia, ventral ganglion and ganglia around anus (PubMed:11013217, PubMed:18809575). Expressed also in hypodermis and body muscles (PubMed:18809575).</text>
</comment>
<comment type="developmental stage">
    <text evidence="5">Expressed at the embryonic stage.</text>
</comment>
<comment type="PTM">
    <text evidence="11">May be phosphorylated at Ser-221 and/or Ser-225 by mlk-1.</text>
</comment>
<comment type="disruption phenotype">
    <text evidence="5 6 7 11">Loss of kgb-1 activation (PubMed:15116070, PubMed:20008556). Hypersensitivity to high concentrations of copper (&gt; 50 microM) and cadmium (&gt;5 microM) and to food starvation which is characterized by a failure for most animals to reach adulthood. The few surviving adults appear starved and are defective in egg laying and are infertile (PubMed:11013217, PubMed:15116070). In addition, have moderate susceptibility to pathogenic bacteria infection characterized by a shorter lifespan and a substantial decrease in pmk-1 phosphorylation (PubMed:15256594). In absence of stress, animals have no obvious phenotype (PubMed:11013217, PubMed:15116070).</text>
</comment>
<comment type="similarity">
    <text evidence="13">Belongs to the protein kinase superfamily. STE Ser/Thr protein kinase family. MAP kinase kinase subfamily.</text>
</comment>